<gene>
    <name type="primary">CXCL3</name>
    <name type="synonym">GRO3</name>
    <name type="synonym">GROG</name>
    <name type="synonym">SCYB3</name>
</gene>
<evidence type="ECO:0000250" key="1"/>
<evidence type="ECO:0000269" key="2">
    <source>
    </source>
</evidence>
<evidence type="ECO:0000269" key="3">
    <source>
    </source>
</evidence>
<evidence type="ECO:0000305" key="4"/>
<comment type="function">
    <text evidence="1 2">Ligand for CXCR2 (By similarity). Has chemotactic activity for neutrophils. May play a role in inflammation and exert its effects on endothelial cells in an autocrine fashion. In vitro, the processed form GRO-gamma(5-73) shows a fivefold higher chemotactic activity for neutrophilic granulocytes.</text>
</comment>
<comment type="subcellular location">
    <subcellularLocation>
        <location>Secreted</location>
    </subcellularLocation>
</comment>
<comment type="PTM">
    <text evidence="2">N-terminal processed form GRO-gamma(5-73) is produced by proteolytic cleavage after secretion from peripheral blood monocytes.</text>
</comment>
<comment type="similarity">
    <text evidence="4">Belongs to the intercrine alpha (chemokine CxC) family.</text>
</comment>
<comment type="online information" name="Wikipedia">
    <link uri="https://en.wikipedia.org/wiki/CXCL3"/>
    <text>CXCL3 entry</text>
</comment>
<dbReference type="EMBL" id="X53800">
    <property type="protein sequence ID" value="CAA37809.1"/>
    <property type="molecule type" value="mRNA"/>
</dbReference>
<dbReference type="EMBL" id="M36821">
    <property type="protein sequence ID" value="AAA63184.1"/>
    <property type="molecule type" value="mRNA"/>
</dbReference>
<dbReference type="EMBL" id="AC097709">
    <property type="protein sequence ID" value="AAY41006.1"/>
    <property type="molecule type" value="Genomic_DNA"/>
</dbReference>
<dbReference type="EMBL" id="CH471057">
    <property type="protein sequence ID" value="EAX05698.1"/>
    <property type="molecule type" value="Genomic_DNA"/>
</dbReference>
<dbReference type="EMBL" id="BC016308">
    <property type="protein sequence ID" value="AAH16308.1"/>
    <property type="molecule type" value="mRNA"/>
</dbReference>
<dbReference type="EMBL" id="BC065743">
    <property type="protein sequence ID" value="AAH65743.1"/>
    <property type="molecule type" value="mRNA"/>
</dbReference>
<dbReference type="CCDS" id="CCDS34007.1"/>
<dbReference type="PIR" id="JH0282">
    <property type="entry name" value="B38290"/>
</dbReference>
<dbReference type="RefSeq" id="NP_002081.2">
    <property type="nucleotide sequence ID" value="NM_002090.3"/>
</dbReference>
<dbReference type="PDB" id="8XWF">
    <property type="method" value="EM"/>
    <property type="resolution" value="3.65 A"/>
    <property type="chains" value="D/E=35-107"/>
</dbReference>
<dbReference type="PDB" id="8XX3">
    <property type="method" value="EM"/>
    <property type="resolution" value="3.38 A"/>
    <property type="chains" value="D/E=35-107"/>
</dbReference>
<dbReference type="PDBsum" id="8XWF"/>
<dbReference type="PDBsum" id="8XX3"/>
<dbReference type="EMDB" id="EMD-38734"/>
<dbReference type="EMDB" id="EMD-38744"/>
<dbReference type="SMR" id="P19876"/>
<dbReference type="BioGRID" id="109178">
    <property type="interactions" value="13"/>
</dbReference>
<dbReference type="DIP" id="DIP-5909N"/>
<dbReference type="FunCoup" id="P19876">
    <property type="interactions" value="1159"/>
</dbReference>
<dbReference type="IntAct" id="P19876">
    <property type="interactions" value="10"/>
</dbReference>
<dbReference type="STRING" id="9606.ENSP00000296026"/>
<dbReference type="BioMuta" id="CXCL3"/>
<dbReference type="DMDM" id="127086"/>
<dbReference type="jPOST" id="P19876"/>
<dbReference type="MassIVE" id="P19876"/>
<dbReference type="PaxDb" id="9606-ENSP00000296026"/>
<dbReference type="PeptideAtlas" id="P19876"/>
<dbReference type="ProteomicsDB" id="53698"/>
<dbReference type="Antibodypedia" id="13341">
    <property type="antibodies" value="281 antibodies from 30 providers"/>
</dbReference>
<dbReference type="DNASU" id="2921"/>
<dbReference type="Ensembl" id="ENST00000296026.4">
    <property type="protein sequence ID" value="ENSP00000296026.4"/>
    <property type="gene ID" value="ENSG00000163734.4"/>
</dbReference>
<dbReference type="GeneID" id="2921"/>
<dbReference type="KEGG" id="hsa:2921"/>
<dbReference type="MANE-Select" id="ENST00000296026.4">
    <property type="protein sequence ID" value="ENSP00000296026.4"/>
    <property type="RefSeq nucleotide sequence ID" value="NM_002090.3"/>
    <property type="RefSeq protein sequence ID" value="NP_002081.2"/>
</dbReference>
<dbReference type="UCSC" id="uc003hhl.5">
    <property type="organism name" value="human"/>
</dbReference>
<dbReference type="AGR" id="HGNC:4604"/>
<dbReference type="CTD" id="2921"/>
<dbReference type="DisGeNET" id="2921"/>
<dbReference type="GeneCards" id="CXCL3"/>
<dbReference type="HGNC" id="HGNC:4604">
    <property type="gene designation" value="CXCL3"/>
</dbReference>
<dbReference type="HPA" id="ENSG00000163734">
    <property type="expression patterns" value="Tissue enhanced (adipose tissue, cervix)"/>
</dbReference>
<dbReference type="MIM" id="139111">
    <property type="type" value="gene"/>
</dbReference>
<dbReference type="neXtProt" id="NX_P19876"/>
<dbReference type="OpenTargets" id="ENSG00000163734"/>
<dbReference type="PharmGKB" id="PA35052"/>
<dbReference type="VEuPathDB" id="HostDB:ENSG00000163734"/>
<dbReference type="eggNOG" id="ENOG502S7MM">
    <property type="taxonomic scope" value="Eukaryota"/>
</dbReference>
<dbReference type="GeneTree" id="ENSGT00940000163986"/>
<dbReference type="HOGENOM" id="CLU_143902_1_1_1"/>
<dbReference type="InParanoid" id="P19876"/>
<dbReference type="OMA" id="PSCANVE"/>
<dbReference type="OrthoDB" id="8872899at2759"/>
<dbReference type="PAN-GO" id="P19876">
    <property type="GO annotations" value="8 GO annotations based on evolutionary models"/>
</dbReference>
<dbReference type="PhylomeDB" id="P19876"/>
<dbReference type="TreeFam" id="TF333433"/>
<dbReference type="PathwayCommons" id="P19876"/>
<dbReference type="Reactome" id="R-HSA-380108">
    <property type="pathway name" value="Chemokine receptors bind chemokines"/>
</dbReference>
<dbReference type="Reactome" id="R-HSA-418594">
    <property type="pathway name" value="G alpha (i) signalling events"/>
</dbReference>
<dbReference type="SignaLink" id="P19876"/>
<dbReference type="SIGNOR" id="P19876"/>
<dbReference type="BioGRID-ORCS" id="2921">
    <property type="hits" value="15 hits in 1083 CRISPR screens"/>
</dbReference>
<dbReference type="GeneWiki" id="CXCL3"/>
<dbReference type="GenomeRNAi" id="2921"/>
<dbReference type="Pharos" id="P19876">
    <property type="development level" value="Tbio"/>
</dbReference>
<dbReference type="PRO" id="PR:P19876"/>
<dbReference type="Proteomes" id="UP000005640">
    <property type="component" value="Chromosome 4"/>
</dbReference>
<dbReference type="RNAct" id="P19876">
    <property type="molecule type" value="protein"/>
</dbReference>
<dbReference type="Bgee" id="ENSG00000163734">
    <property type="expression patterns" value="Expressed in cartilage tissue and 131 other cell types or tissues"/>
</dbReference>
<dbReference type="GO" id="GO:0005576">
    <property type="term" value="C:extracellular region"/>
    <property type="evidence" value="ECO:0000304"/>
    <property type="project" value="Reactome"/>
</dbReference>
<dbReference type="GO" id="GO:0005615">
    <property type="term" value="C:extracellular space"/>
    <property type="evidence" value="ECO:0000314"/>
    <property type="project" value="UniProtKB"/>
</dbReference>
<dbReference type="GO" id="GO:0008009">
    <property type="term" value="F:chemokine activity"/>
    <property type="evidence" value="ECO:0000250"/>
    <property type="project" value="UniProtKB"/>
</dbReference>
<dbReference type="GO" id="GO:0006955">
    <property type="term" value="P:immune response"/>
    <property type="evidence" value="ECO:0007669"/>
    <property type="project" value="InterPro"/>
</dbReference>
<dbReference type="GO" id="GO:0006954">
    <property type="term" value="P:inflammatory response"/>
    <property type="evidence" value="ECO:0007669"/>
    <property type="project" value="UniProtKB-KW"/>
</dbReference>
<dbReference type="GO" id="GO:0030593">
    <property type="term" value="P:neutrophil chemotaxis"/>
    <property type="evidence" value="ECO:0000250"/>
    <property type="project" value="UniProtKB"/>
</dbReference>
<dbReference type="CDD" id="cd00273">
    <property type="entry name" value="Chemokine_CXC"/>
    <property type="match status" value="1"/>
</dbReference>
<dbReference type="FunFam" id="2.40.50.40:FF:000004">
    <property type="entry name" value="C-X-C motif chemokine"/>
    <property type="match status" value="1"/>
</dbReference>
<dbReference type="Gene3D" id="2.40.50.40">
    <property type="match status" value="1"/>
</dbReference>
<dbReference type="InterPro" id="IPR039809">
    <property type="entry name" value="Chemokine_b/g/d"/>
</dbReference>
<dbReference type="InterPro" id="IPR001089">
    <property type="entry name" value="Chemokine_CXC"/>
</dbReference>
<dbReference type="InterPro" id="IPR018048">
    <property type="entry name" value="Chemokine_CXC_CS"/>
</dbReference>
<dbReference type="InterPro" id="IPR001811">
    <property type="entry name" value="Chemokine_IL8-like_dom"/>
</dbReference>
<dbReference type="InterPro" id="IPR033899">
    <property type="entry name" value="CXC_Chemokine_domain"/>
</dbReference>
<dbReference type="InterPro" id="IPR036048">
    <property type="entry name" value="Interleukin_8-like_sf"/>
</dbReference>
<dbReference type="PANTHER" id="PTHR12015:SF196">
    <property type="entry name" value="C-X-C MOTIF CHEMOKINE 3"/>
    <property type="match status" value="1"/>
</dbReference>
<dbReference type="PANTHER" id="PTHR12015">
    <property type="entry name" value="SMALL INDUCIBLE CYTOKINE A"/>
    <property type="match status" value="1"/>
</dbReference>
<dbReference type="Pfam" id="PF00048">
    <property type="entry name" value="IL8"/>
    <property type="match status" value="1"/>
</dbReference>
<dbReference type="PRINTS" id="PR00436">
    <property type="entry name" value="INTERLEUKIN8"/>
</dbReference>
<dbReference type="PRINTS" id="PR00437">
    <property type="entry name" value="SMALLCYTKCXC"/>
</dbReference>
<dbReference type="SMART" id="SM00199">
    <property type="entry name" value="SCY"/>
    <property type="match status" value="1"/>
</dbReference>
<dbReference type="SUPFAM" id="SSF54117">
    <property type="entry name" value="Interleukin 8-like chemokines"/>
    <property type="match status" value="1"/>
</dbReference>
<dbReference type="PROSITE" id="PS00471">
    <property type="entry name" value="SMALL_CYTOKINES_CXC"/>
    <property type="match status" value="1"/>
</dbReference>
<reference key="1">
    <citation type="journal article" date="1990" name="J. Exp. Med.">
        <title>Cloning and characterization of cDNAs for murine macrophage inflammatory protein 2 and its human homologues.</title>
        <authorList>
            <person name="Tekamp-Olson P."/>
            <person name="Gallegos C."/>
            <person name="Bauer D."/>
            <person name="McClain J."/>
            <person name="Sherry B."/>
            <person name="Fabre M."/>
            <person name="van Deventer S."/>
            <person name="Cerami A."/>
        </authorList>
    </citation>
    <scope>NUCLEOTIDE SEQUENCE [MRNA]</scope>
    <source>
        <tissue>Histiocytic lymphoma</tissue>
    </source>
</reference>
<reference key="2">
    <citation type="journal article" date="1990" name="Proc. Natl. Acad. Sci. U.S.A.">
        <title>Identification of three related human GRO genes encoding cytokine functions.</title>
        <authorList>
            <person name="Haskill S."/>
            <person name="Peace A."/>
            <person name="Morris J."/>
            <person name="Sporn S.A."/>
            <person name="Anisowicz A."/>
            <person name="Lee S.W."/>
            <person name="Smith T."/>
            <person name="Martin G."/>
            <person name="Ralph P."/>
            <person name="Sager R."/>
        </authorList>
    </citation>
    <scope>NUCLEOTIDE SEQUENCE [MRNA]</scope>
</reference>
<reference key="3">
    <citation type="journal article" date="2005" name="Nature">
        <title>Generation and annotation of the DNA sequences of human chromosomes 2 and 4.</title>
        <authorList>
            <person name="Hillier L.W."/>
            <person name="Graves T.A."/>
            <person name="Fulton R.S."/>
            <person name="Fulton L.A."/>
            <person name="Pepin K.H."/>
            <person name="Minx P."/>
            <person name="Wagner-McPherson C."/>
            <person name="Layman D."/>
            <person name="Wylie K."/>
            <person name="Sekhon M."/>
            <person name="Becker M.C."/>
            <person name="Fewell G.A."/>
            <person name="Delehaunty K.D."/>
            <person name="Miner T.L."/>
            <person name="Nash W.E."/>
            <person name="Kremitzki C."/>
            <person name="Oddy L."/>
            <person name="Du H."/>
            <person name="Sun H."/>
            <person name="Bradshaw-Cordum H."/>
            <person name="Ali J."/>
            <person name="Carter J."/>
            <person name="Cordes M."/>
            <person name="Harris A."/>
            <person name="Isak A."/>
            <person name="van Brunt A."/>
            <person name="Nguyen C."/>
            <person name="Du F."/>
            <person name="Courtney L."/>
            <person name="Kalicki J."/>
            <person name="Ozersky P."/>
            <person name="Abbott S."/>
            <person name="Armstrong J."/>
            <person name="Belter E.A."/>
            <person name="Caruso L."/>
            <person name="Cedroni M."/>
            <person name="Cotton M."/>
            <person name="Davidson T."/>
            <person name="Desai A."/>
            <person name="Elliott G."/>
            <person name="Erb T."/>
            <person name="Fronick C."/>
            <person name="Gaige T."/>
            <person name="Haakenson W."/>
            <person name="Haglund K."/>
            <person name="Holmes A."/>
            <person name="Harkins R."/>
            <person name="Kim K."/>
            <person name="Kruchowski S.S."/>
            <person name="Strong C.M."/>
            <person name="Grewal N."/>
            <person name="Goyea E."/>
            <person name="Hou S."/>
            <person name="Levy A."/>
            <person name="Martinka S."/>
            <person name="Mead K."/>
            <person name="McLellan M.D."/>
            <person name="Meyer R."/>
            <person name="Randall-Maher J."/>
            <person name="Tomlinson C."/>
            <person name="Dauphin-Kohlberg S."/>
            <person name="Kozlowicz-Reilly A."/>
            <person name="Shah N."/>
            <person name="Swearengen-Shahid S."/>
            <person name="Snider J."/>
            <person name="Strong J.T."/>
            <person name="Thompson J."/>
            <person name="Yoakum M."/>
            <person name="Leonard S."/>
            <person name="Pearman C."/>
            <person name="Trani L."/>
            <person name="Radionenko M."/>
            <person name="Waligorski J.E."/>
            <person name="Wang C."/>
            <person name="Rock S.M."/>
            <person name="Tin-Wollam A.-M."/>
            <person name="Maupin R."/>
            <person name="Latreille P."/>
            <person name="Wendl M.C."/>
            <person name="Yang S.-P."/>
            <person name="Pohl C."/>
            <person name="Wallis J.W."/>
            <person name="Spieth J."/>
            <person name="Bieri T.A."/>
            <person name="Berkowicz N."/>
            <person name="Nelson J.O."/>
            <person name="Osborne J."/>
            <person name="Ding L."/>
            <person name="Meyer R."/>
            <person name="Sabo A."/>
            <person name="Shotland Y."/>
            <person name="Sinha P."/>
            <person name="Wohldmann P.E."/>
            <person name="Cook L.L."/>
            <person name="Hickenbotham M.T."/>
            <person name="Eldred J."/>
            <person name="Williams D."/>
            <person name="Jones T.A."/>
            <person name="She X."/>
            <person name="Ciccarelli F.D."/>
            <person name="Izaurralde E."/>
            <person name="Taylor J."/>
            <person name="Schmutz J."/>
            <person name="Myers R.M."/>
            <person name="Cox D.R."/>
            <person name="Huang X."/>
            <person name="McPherson J.D."/>
            <person name="Mardis E.R."/>
            <person name="Clifton S.W."/>
            <person name="Warren W.C."/>
            <person name="Chinwalla A.T."/>
            <person name="Eddy S.R."/>
            <person name="Marra M.A."/>
            <person name="Ovcharenko I."/>
            <person name="Furey T.S."/>
            <person name="Miller W."/>
            <person name="Eichler E.E."/>
            <person name="Bork P."/>
            <person name="Suyama M."/>
            <person name="Torrents D."/>
            <person name="Waterston R.H."/>
            <person name="Wilson R.K."/>
        </authorList>
    </citation>
    <scope>NUCLEOTIDE SEQUENCE [LARGE SCALE GENOMIC DNA]</scope>
</reference>
<reference key="4">
    <citation type="submission" date="2005-07" db="EMBL/GenBank/DDBJ databases">
        <authorList>
            <person name="Mural R.J."/>
            <person name="Istrail S."/>
            <person name="Sutton G.G."/>
            <person name="Florea L."/>
            <person name="Halpern A.L."/>
            <person name="Mobarry C.M."/>
            <person name="Lippert R."/>
            <person name="Walenz B."/>
            <person name="Shatkay H."/>
            <person name="Dew I."/>
            <person name="Miller J.R."/>
            <person name="Flanigan M.J."/>
            <person name="Edwards N.J."/>
            <person name="Bolanos R."/>
            <person name="Fasulo D."/>
            <person name="Halldorsson B.V."/>
            <person name="Hannenhalli S."/>
            <person name="Turner R."/>
            <person name="Yooseph S."/>
            <person name="Lu F."/>
            <person name="Nusskern D.R."/>
            <person name="Shue B.C."/>
            <person name="Zheng X.H."/>
            <person name="Zhong F."/>
            <person name="Delcher A.L."/>
            <person name="Huson D.H."/>
            <person name="Kravitz S.A."/>
            <person name="Mouchard L."/>
            <person name="Reinert K."/>
            <person name="Remington K.A."/>
            <person name="Clark A.G."/>
            <person name="Waterman M.S."/>
            <person name="Eichler E.E."/>
            <person name="Adams M.D."/>
            <person name="Hunkapiller M.W."/>
            <person name="Myers E.W."/>
            <person name="Venter J.C."/>
        </authorList>
    </citation>
    <scope>NUCLEOTIDE SEQUENCE [LARGE SCALE GENOMIC DNA]</scope>
</reference>
<reference key="5">
    <citation type="journal article" date="2004" name="Genome Res.">
        <title>The status, quality, and expansion of the NIH full-length cDNA project: the Mammalian Gene Collection (MGC).</title>
        <authorList>
            <consortium name="The MGC Project Team"/>
        </authorList>
    </citation>
    <scope>NUCLEOTIDE SEQUENCE [LARGE SCALE MRNA]</scope>
    <source>
        <tissue>Lung</tissue>
    </source>
</reference>
<reference key="6">
    <citation type="journal article" date="2004" name="Protein Sci.">
        <title>Signal peptide prediction based on analysis of experimentally verified cleavage sites.</title>
        <authorList>
            <person name="Zhang Z."/>
            <person name="Henzel W.J."/>
        </authorList>
    </citation>
    <scope>PROTEIN SEQUENCE OF 35-49</scope>
</reference>
<reference key="7">
    <citation type="journal article" date="1999" name="Eur. J. Biochem.">
        <title>Isolation of the CXC chemokines ENA-78, GRO alpha and GRO gamma from tumor cells and leukocytes reveals NH2-terminal heterogeneity. Functional comparison of different natural isoforms.</title>
        <authorList>
            <person name="Wuyts A."/>
            <person name="Govaerts C."/>
            <person name="Struyf S."/>
            <person name="Lenaerts J.-P."/>
            <person name="Put W."/>
            <person name="Conings R."/>
            <person name="Proost P."/>
            <person name="Van Damme J."/>
        </authorList>
    </citation>
    <scope>PROTEIN SEQUENCE OF 39-45</scope>
    <scope>IDENTIFICATION OF GRO-GAMMA(5-73)</scope>
    <scope>PROTEOLYTIC PROCESSING OF N-TERMINUS</scope>
    <scope>FUNCTION</scope>
    <source>
        <tissue>Peripheral blood monocyte</tissue>
    </source>
</reference>
<proteinExistence type="evidence at protein level"/>
<keyword id="KW-0002">3D-structure</keyword>
<keyword id="KW-0145">Chemotaxis</keyword>
<keyword id="KW-0202">Cytokine</keyword>
<keyword id="KW-0903">Direct protein sequencing</keyword>
<keyword id="KW-1015">Disulfide bond</keyword>
<keyword id="KW-0395">Inflammatory response</keyword>
<keyword id="KW-1267">Proteomics identification</keyword>
<keyword id="KW-1185">Reference proteome</keyword>
<keyword id="KW-0964">Secreted</keyword>
<keyword id="KW-0732">Signal</keyword>
<protein>
    <recommendedName>
        <fullName>C-X-C motif chemokine 3</fullName>
    </recommendedName>
    <alternativeName>
        <fullName>GRO-gamma(1-73)</fullName>
    </alternativeName>
    <alternativeName>
        <fullName>Growth-regulated protein gamma</fullName>
        <shortName>GRO-gamma</shortName>
    </alternativeName>
    <alternativeName>
        <fullName>Macrophage inflammatory protein 2-beta</fullName>
        <shortName>MIP2-beta</shortName>
    </alternativeName>
    <component>
        <recommendedName>
            <fullName>GRO-gamma(5-73)</fullName>
        </recommendedName>
    </component>
</protein>
<sequence length="107" mass="11342">MAHATLSAAPSNPRLLRVALLLLLLVAASRRAAGASVVTELRCQCLQTLQGIHLKNIQSVNVRSPGPHCAQTEVIATLKNGKKACLNPASPMVQKIIEKILNKGSTN</sequence>
<accession>P19876</accession>
<accession>Q4W5H9</accession>
<feature type="signal peptide" evidence="3">
    <location>
        <begin position="1"/>
        <end position="34"/>
    </location>
</feature>
<feature type="chain" id="PRO_0000005065" description="C-X-C motif chemokine 3">
    <location>
        <begin position="35"/>
        <end position="107"/>
    </location>
</feature>
<feature type="chain" id="PRO_0000005066" description="GRO-gamma(5-73)">
    <location>
        <begin position="39"/>
        <end position="107"/>
    </location>
</feature>
<feature type="disulfide bond" evidence="1">
    <location>
        <begin position="43"/>
        <end position="69"/>
    </location>
</feature>
<feature type="disulfide bond" evidence="1">
    <location>
        <begin position="45"/>
        <end position="85"/>
    </location>
</feature>
<feature type="sequence variant" id="VAR_059210" description="In dbSNP:rs352043.">
    <original>H</original>
    <variation>R</variation>
    <location>
        <position position="3"/>
    </location>
</feature>
<feature type="sequence conflict" description="In Ref. 2; AAA63184." evidence="4" ref="2">
    <original>AA</original>
    <variation>G</variation>
    <location>
        <begin position="27"/>
        <end position="28"/>
    </location>
</feature>
<organism>
    <name type="scientific">Homo sapiens</name>
    <name type="common">Human</name>
    <dbReference type="NCBI Taxonomy" id="9606"/>
    <lineage>
        <taxon>Eukaryota</taxon>
        <taxon>Metazoa</taxon>
        <taxon>Chordata</taxon>
        <taxon>Craniata</taxon>
        <taxon>Vertebrata</taxon>
        <taxon>Euteleostomi</taxon>
        <taxon>Mammalia</taxon>
        <taxon>Eutheria</taxon>
        <taxon>Euarchontoglires</taxon>
        <taxon>Primates</taxon>
        <taxon>Haplorrhini</taxon>
        <taxon>Catarrhini</taxon>
        <taxon>Hominidae</taxon>
        <taxon>Homo</taxon>
    </lineage>
</organism>
<name>CXCL3_HUMAN</name>